<dbReference type="EC" id="2.7.7.27" evidence="1"/>
<dbReference type="EMBL" id="CP000388">
    <property type="protein sequence ID" value="ABG41440.1"/>
    <property type="molecule type" value="Genomic_DNA"/>
</dbReference>
<dbReference type="RefSeq" id="WP_011575695.1">
    <property type="nucleotide sequence ID" value="NC_008228.1"/>
</dbReference>
<dbReference type="SMR" id="Q15RP8"/>
<dbReference type="STRING" id="342610.Patl_2932"/>
<dbReference type="KEGG" id="pat:Patl_2932"/>
<dbReference type="eggNOG" id="COG0448">
    <property type="taxonomic scope" value="Bacteria"/>
</dbReference>
<dbReference type="HOGENOM" id="CLU_029499_14_1_6"/>
<dbReference type="OrthoDB" id="9801810at2"/>
<dbReference type="UniPathway" id="UPA00164"/>
<dbReference type="Proteomes" id="UP000001981">
    <property type="component" value="Chromosome"/>
</dbReference>
<dbReference type="GO" id="GO:0005524">
    <property type="term" value="F:ATP binding"/>
    <property type="evidence" value="ECO:0007669"/>
    <property type="project" value="UniProtKB-KW"/>
</dbReference>
<dbReference type="GO" id="GO:0008878">
    <property type="term" value="F:glucose-1-phosphate adenylyltransferase activity"/>
    <property type="evidence" value="ECO:0007669"/>
    <property type="project" value="UniProtKB-UniRule"/>
</dbReference>
<dbReference type="GO" id="GO:0005978">
    <property type="term" value="P:glycogen biosynthetic process"/>
    <property type="evidence" value="ECO:0007669"/>
    <property type="project" value="UniProtKB-UniRule"/>
</dbReference>
<dbReference type="CDD" id="cd02508">
    <property type="entry name" value="ADP_Glucose_PP"/>
    <property type="match status" value="1"/>
</dbReference>
<dbReference type="CDD" id="cd04651">
    <property type="entry name" value="LbH_G1P_AT_C"/>
    <property type="match status" value="1"/>
</dbReference>
<dbReference type="Gene3D" id="2.160.10.10">
    <property type="entry name" value="Hexapeptide repeat proteins"/>
    <property type="match status" value="1"/>
</dbReference>
<dbReference type="Gene3D" id="3.90.550.10">
    <property type="entry name" value="Spore Coat Polysaccharide Biosynthesis Protein SpsA, Chain A"/>
    <property type="match status" value="1"/>
</dbReference>
<dbReference type="HAMAP" id="MF_00624">
    <property type="entry name" value="GlgC"/>
    <property type="match status" value="1"/>
</dbReference>
<dbReference type="InterPro" id="IPR011831">
    <property type="entry name" value="ADP-Glc_PPase"/>
</dbReference>
<dbReference type="InterPro" id="IPR005836">
    <property type="entry name" value="ADP_Glu_pyroP_CS"/>
</dbReference>
<dbReference type="InterPro" id="IPR023049">
    <property type="entry name" value="GlgC_bac"/>
</dbReference>
<dbReference type="InterPro" id="IPR056818">
    <property type="entry name" value="GlmU/GlgC-like_hexapep"/>
</dbReference>
<dbReference type="InterPro" id="IPR005835">
    <property type="entry name" value="NTP_transferase_dom"/>
</dbReference>
<dbReference type="InterPro" id="IPR029044">
    <property type="entry name" value="Nucleotide-diphossugar_trans"/>
</dbReference>
<dbReference type="InterPro" id="IPR011004">
    <property type="entry name" value="Trimer_LpxA-like_sf"/>
</dbReference>
<dbReference type="NCBIfam" id="TIGR02091">
    <property type="entry name" value="glgC"/>
    <property type="match status" value="1"/>
</dbReference>
<dbReference type="NCBIfam" id="NF001947">
    <property type="entry name" value="PRK00725.1"/>
    <property type="match status" value="1"/>
</dbReference>
<dbReference type="NCBIfam" id="NF002023">
    <property type="entry name" value="PRK00844.1"/>
    <property type="match status" value="1"/>
</dbReference>
<dbReference type="PANTHER" id="PTHR43523:SF2">
    <property type="entry name" value="GLUCOSE-1-PHOSPHATE ADENYLYLTRANSFERASE"/>
    <property type="match status" value="1"/>
</dbReference>
<dbReference type="PANTHER" id="PTHR43523">
    <property type="entry name" value="GLUCOSE-1-PHOSPHATE ADENYLYLTRANSFERASE-RELATED"/>
    <property type="match status" value="1"/>
</dbReference>
<dbReference type="Pfam" id="PF24894">
    <property type="entry name" value="Hexapep_GlmU"/>
    <property type="match status" value="1"/>
</dbReference>
<dbReference type="Pfam" id="PF00483">
    <property type="entry name" value="NTP_transferase"/>
    <property type="match status" value="1"/>
</dbReference>
<dbReference type="SUPFAM" id="SSF53448">
    <property type="entry name" value="Nucleotide-diphospho-sugar transferases"/>
    <property type="match status" value="1"/>
</dbReference>
<dbReference type="SUPFAM" id="SSF51161">
    <property type="entry name" value="Trimeric LpxA-like enzymes"/>
    <property type="match status" value="1"/>
</dbReference>
<dbReference type="PROSITE" id="PS00808">
    <property type="entry name" value="ADP_GLC_PYROPHOSPH_1"/>
    <property type="match status" value="1"/>
</dbReference>
<dbReference type="PROSITE" id="PS00809">
    <property type="entry name" value="ADP_GLC_PYROPHOSPH_2"/>
    <property type="match status" value="1"/>
</dbReference>
<dbReference type="PROSITE" id="PS00810">
    <property type="entry name" value="ADP_GLC_PYROPHOSPH_3"/>
    <property type="match status" value="1"/>
</dbReference>
<name>GLGC2_PSEA6</name>
<feature type="chain" id="PRO_0000261886" description="Glucose-1-phosphate adenylyltransferase 2">
    <location>
        <begin position="1"/>
        <end position="420"/>
    </location>
</feature>
<feature type="binding site" evidence="1">
    <location>
        <position position="109"/>
    </location>
    <ligand>
        <name>alpha-D-glucose 1-phosphate</name>
        <dbReference type="ChEBI" id="CHEBI:58601"/>
    </ligand>
</feature>
<feature type="binding site" evidence="1">
    <location>
        <position position="175"/>
    </location>
    <ligand>
        <name>alpha-D-glucose 1-phosphate</name>
        <dbReference type="ChEBI" id="CHEBI:58601"/>
    </ligand>
</feature>
<feature type="binding site" evidence="1">
    <location>
        <begin position="190"/>
        <end position="191"/>
    </location>
    <ligand>
        <name>alpha-D-glucose 1-phosphate</name>
        <dbReference type="ChEBI" id="CHEBI:58601"/>
    </ligand>
</feature>
<feature type="binding site" evidence="1">
    <location>
        <position position="208"/>
    </location>
    <ligand>
        <name>alpha-D-glucose 1-phosphate</name>
        <dbReference type="ChEBI" id="CHEBI:58601"/>
    </ligand>
</feature>
<comment type="function">
    <text evidence="1">Involved in the biosynthesis of ADP-glucose, a building block required for the elongation reactions to produce glycogen. Catalyzes the reaction between ATP and alpha-D-glucose 1-phosphate (G1P) to produce pyrophosphate and ADP-Glc.</text>
</comment>
<comment type="catalytic activity">
    <reaction evidence="1">
        <text>alpha-D-glucose 1-phosphate + ATP + H(+) = ADP-alpha-D-glucose + diphosphate</text>
        <dbReference type="Rhea" id="RHEA:12120"/>
        <dbReference type="ChEBI" id="CHEBI:15378"/>
        <dbReference type="ChEBI" id="CHEBI:30616"/>
        <dbReference type="ChEBI" id="CHEBI:33019"/>
        <dbReference type="ChEBI" id="CHEBI:57498"/>
        <dbReference type="ChEBI" id="CHEBI:58601"/>
        <dbReference type="EC" id="2.7.7.27"/>
    </reaction>
</comment>
<comment type="pathway">
    <text evidence="1">Glycan biosynthesis; glycogen biosynthesis.</text>
</comment>
<comment type="subunit">
    <text evidence="1">Homotetramer.</text>
</comment>
<comment type="similarity">
    <text evidence="1">Belongs to the bacterial/plant glucose-1-phosphate adenylyltransferase family.</text>
</comment>
<sequence length="420" mass="47265">MPNPSPRYISNLTRDTYALILAGGRGSRLHELTDWRAKPALYFGGKFRIIDFPLSNCINSGIKRIGVVTQYKSHSLIRHLVRGWGHFRKELGESVEILPASQRSSGNWYEGTADAVFQNIDIIRDEIPKYVMILSGDHIYSMDYANILAHHVESGAKMTVSCMPVPIEEAAGAFGVMSVDEDYRILGFEEKPENPTPLPNDPTRCLASMGNYVFDTEFLFEHLKHDAQNEGSERDFGKDIIPSIIKDHPVFAYPFSNDDGEVSYWRDVGTLDSFWLANMELVSPKPPLNLYDKKWPIWTYQEQLPPAKFVWEEYNRCGAAIDSVVSGGCIISGATVRKSLCFSNVHVHSYSEIEESVLLPDVEIKRNCKIKKAIIDRGCIVPEGTVIGHNHDEDRARGFRVTNKGVVLVTREMLGLKVGI</sequence>
<reference key="1">
    <citation type="submission" date="2006-06" db="EMBL/GenBank/DDBJ databases">
        <title>Complete sequence of Pseudoalteromonas atlantica T6c.</title>
        <authorList>
            <consortium name="US DOE Joint Genome Institute"/>
            <person name="Copeland A."/>
            <person name="Lucas S."/>
            <person name="Lapidus A."/>
            <person name="Barry K."/>
            <person name="Detter J.C."/>
            <person name="Glavina del Rio T."/>
            <person name="Hammon N."/>
            <person name="Israni S."/>
            <person name="Dalin E."/>
            <person name="Tice H."/>
            <person name="Pitluck S."/>
            <person name="Saunders E."/>
            <person name="Brettin T."/>
            <person name="Bruce D."/>
            <person name="Han C."/>
            <person name="Tapia R."/>
            <person name="Gilna P."/>
            <person name="Schmutz J."/>
            <person name="Larimer F."/>
            <person name="Land M."/>
            <person name="Hauser L."/>
            <person name="Kyrpides N."/>
            <person name="Kim E."/>
            <person name="Karls A.C."/>
            <person name="Bartlett D."/>
            <person name="Higgins B.P."/>
            <person name="Richardson P."/>
        </authorList>
    </citation>
    <scope>NUCLEOTIDE SEQUENCE [LARGE SCALE GENOMIC DNA]</scope>
    <source>
        <strain>T6c / ATCC BAA-1087</strain>
    </source>
</reference>
<keyword id="KW-0067">ATP-binding</keyword>
<keyword id="KW-0119">Carbohydrate metabolism</keyword>
<keyword id="KW-0320">Glycogen biosynthesis</keyword>
<keyword id="KW-0321">Glycogen metabolism</keyword>
<keyword id="KW-0547">Nucleotide-binding</keyword>
<keyword id="KW-0548">Nucleotidyltransferase</keyword>
<keyword id="KW-0808">Transferase</keyword>
<evidence type="ECO:0000255" key="1">
    <source>
        <dbReference type="HAMAP-Rule" id="MF_00624"/>
    </source>
</evidence>
<protein>
    <recommendedName>
        <fullName evidence="1">Glucose-1-phosphate adenylyltransferase 2</fullName>
        <ecNumber evidence="1">2.7.7.27</ecNumber>
    </recommendedName>
    <alternativeName>
        <fullName evidence="1">ADP-glucose pyrophosphorylase 2</fullName>
        <shortName evidence="1">ADPGlc PPase 2</shortName>
    </alternativeName>
    <alternativeName>
        <fullName evidence="1">ADP-glucose synthase 2</fullName>
    </alternativeName>
</protein>
<accession>Q15RP8</accession>
<organism>
    <name type="scientific">Pseudoalteromonas atlantica (strain T6c / ATCC BAA-1087)</name>
    <dbReference type="NCBI Taxonomy" id="3042615"/>
    <lineage>
        <taxon>Bacteria</taxon>
        <taxon>Pseudomonadati</taxon>
        <taxon>Pseudomonadota</taxon>
        <taxon>Gammaproteobacteria</taxon>
        <taxon>Alteromonadales</taxon>
        <taxon>Alteromonadaceae</taxon>
        <taxon>Paraglaciecola</taxon>
    </lineage>
</organism>
<proteinExistence type="inferred from homology"/>
<gene>
    <name evidence="1" type="primary">glgC2</name>
    <name type="ordered locus">Patl_2932</name>
</gene>